<comment type="function">
    <text evidence="2">Component of the ubiquinol-cytochrome c reductase complex (complex III or cytochrome b-c1 complex) that is part of the mitochondrial respiratory chain. The b-c1 complex mediates electron transfer from ubiquinol to cytochrome c. Contributes to the generation of a proton gradient across the mitochondrial membrane that is then used for ATP synthesis.</text>
</comment>
<comment type="cofactor">
    <cofactor evidence="2">
        <name>heme b</name>
        <dbReference type="ChEBI" id="CHEBI:60344"/>
    </cofactor>
    <text evidence="2">Binds 2 heme b groups non-covalently.</text>
</comment>
<comment type="subunit">
    <text evidence="2">The cytochrome bc1 complex contains 11 subunits: 3 respiratory subunits (MT-CYB, CYC1 and UQCRFS1), 2 core proteins (UQCRC1 and UQCRC2) and 6 low-molecular weight proteins (UQCRH/QCR6, UQCRB/QCR7, UQCRQ/QCR8, UQCR10/QCR9, UQCR11/QCR10 and a cleavage product of UQCRFS1). This cytochrome bc1 complex then forms a dimer.</text>
</comment>
<comment type="subcellular location">
    <subcellularLocation>
        <location evidence="2">Mitochondrion inner membrane</location>
        <topology evidence="2">Multi-pass membrane protein</topology>
    </subcellularLocation>
</comment>
<comment type="miscellaneous">
    <text evidence="1">Heme 1 (or BL or b562) is low-potential and absorbs at about 562 nm, and heme 2 (or BH or b566) is high-potential and absorbs at about 566 nm.</text>
</comment>
<comment type="similarity">
    <text evidence="3 4">Belongs to the cytochrome b family.</text>
</comment>
<comment type="caution">
    <text evidence="2">The full-length protein contains only eight transmembrane helices, not nine as predicted by bioinformatics tools.</text>
</comment>
<accession>Q85IN5</accession>
<organism>
    <name type="scientific">Arctonyx collaris</name>
    <name type="common">Hog badger</name>
    <dbReference type="NCBI Taxonomy" id="139309"/>
    <lineage>
        <taxon>Eukaryota</taxon>
        <taxon>Metazoa</taxon>
        <taxon>Chordata</taxon>
        <taxon>Craniata</taxon>
        <taxon>Vertebrata</taxon>
        <taxon>Euteleostomi</taxon>
        <taxon>Mammalia</taxon>
        <taxon>Eutheria</taxon>
        <taxon>Laurasiatheria</taxon>
        <taxon>Carnivora</taxon>
        <taxon>Caniformia</taxon>
        <taxon>Musteloidea</taxon>
        <taxon>Mustelidae</taxon>
        <taxon>Melinae</taxon>
        <taxon>Arctonyx</taxon>
    </lineage>
</organism>
<evidence type="ECO:0000250" key="1"/>
<evidence type="ECO:0000250" key="2">
    <source>
        <dbReference type="UniProtKB" id="P00157"/>
    </source>
</evidence>
<evidence type="ECO:0000255" key="3">
    <source>
        <dbReference type="PROSITE-ProRule" id="PRU00967"/>
    </source>
</evidence>
<evidence type="ECO:0000255" key="4">
    <source>
        <dbReference type="PROSITE-ProRule" id="PRU00968"/>
    </source>
</evidence>
<gene>
    <name type="primary">MT-CYB</name>
    <name type="synonym">COB</name>
    <name type="synonym">CYTB</name>
    <name type="synonym">MTCYB</name>
</gene>
<reference key="1">
    <citation type="journal article" date="2003" name="Syst. Biol.">
        <title>Type I STS markers are more informative than cytochrome B in phylogenetic reconstruction of the Mustelidae (Mammalia: Carnivora).</title>
        <authorList>
            <person name="Koepfli K.-P."/>
            <person name="Wayne R.K."/>
        </authorList>
    </citation>
    <scope>NUCLEOTIDE SEQUENCE [GENOMIC DNA]</scope>
</reference>
<keyword id="KW-0249">Electron transport</keyword>
<keyword id="KW-0349">Heme</keyword>
<keyword id="KW-0408">Iron</keyword>
<keyword id="KW-0472">Membrane</keyword>
<keyword id="KW-0479">Metal-binding</keyword>
<keyword id="KW-0496">Mitochondrion</keyword>
<keyword id="KW-0999">Mitochondrion inner membrane</keyword>
<keyword id="KW-0679">Respiratory chain</keyword>
<keyword id="KW-0812">Transmembrane</keyword>
<keyword id="KW-1133">Transmembrane helix</keyword>
<keyword id="KW-0813">Transport</keyword>
<keyword id="KW-0830">Ubiquinone</keyword>
<proteinExistence type="inferred from homology"/>
<name>CYB_ARCCL</name>
<dbReference type="EMBL" id="AF498157">
    <property type="protein sequence ID" value="AAP19703.1"/>
    <property type="molecule type" value="Genomic_DNA"/>
</dbReference>
<dbReference type="SMR" id="Q85IN5"/>
<dbReference type="GO" id="GO:0005743">
    <property type="term" value="C:mitochondrial inner membrane"/>
    <property type="evidence" value="ECO:0007669"/>
    <property type="project" value="UniProtKB-SubCell"/>
</dbReference>
<dbReference type="GO" id="GO:0045275">
    <property type="term" value="C:respiratory chain complex III"/>
    <property type="evidence" value="ECO:0007669"/>
    <property type="project" value="InterPro"/>
</dbReference>
<dbReference type="GO" id="GO:0046872">
    <property type="term" value="F:metal ion binding"/>
    <property type="evidence" value="ECO:0007669"/>
    <property type="project" value="UniProtKB-KW"/>
</dbReference>
<dbReference type="GO" id="GO:0008121">
    <property type="term" value="F:ubiquinol-cytochrome-c reductase activity"/>
    <property type="evidence" value="ECO:0007669"/>
    <property type="project" value="InterPro"/>
</dbReference>
<dbReference type="GO" id="GO:0006122">
    <property type="term" value="P:mitochondrial electron transport, ubiquinol to cytochrome c"/>
    <property type="evidence" value="ECO:0007669"/>
    <property type="project" value="TreeGrafter"/>
</dbReference>
<dbReference type="CDD" id="cd00290">
    <property type="entry name" value="cytochrome_b_C"/>
    <property type="match status" value="1"/>
</dbReference>
<dbReference type="CDD" id="cd00284">
    <property type="entry name" value="Cytochrome_b_N"/>
    <property type="match status" value="1"/>
</dbReference>
<dbReference type="FunFam" id="1.20.810.10:FF:000002">
    <property type="entry name" value="Cytochrome b"/>
    <property type="match status" value="1"/>
</dbReference>
<dbReference type="Gene3D" id="1.20.810.10">
    <property type="entry name" value="Cytochrome Bc1 Complex, Chain C"/>
    <property type="match status" value="1"/>
</dbReference>
<dbReference type="InterPro" id="IPR005798">
    <property type="entry name" value="Cyt_b/b6_C"/>
</dbReference>
<dbReference type="InterPro" id="IPR036150">
    <property type="entry name" value="Cyt_b/b6_C_sf"/>
</dbReference>
<dbReference type="InterPro" id="IPR005797">
    <property type="entry name" value="Cyt_b/b6_N"/>
</dbReference>
<dbReference type="InterPro" id="IPR027387">
    <property type="entry name" value="Cytb/b6-like_sf"/>
</dbReference>
<dbReference type="InterPro" id="IPR030689">
    <property type="entry name" value="Cytochrome_b"/>
</dbReference>
<dbReference type="InterPro" id="IPR048260">
    <property type="entry name" value="Cytochrome_b_C_euk/bac"/>
</dbReference>
<dbReference type="InterPro" id="IPR048259">
    <property type="entry name" value="Cytochrome_b_N_euk/bac"/>
</dbReference>
<dbReference type="InterPro" id="IPR016174">
    <property type="entry name" value="Di-haem_cyt_TM"/>
</dbReference>
<dbReference type="PANTHER" id="PTHR19271">
    <property type="entry name" value="CYTOCHROME B"/>
    <property type="match status" value="1"/>
</dbReference>
<dbReference type="PANTHER" id="PTHR19271:SF16">
    <property type="entry name" value="CYTOCHROME B"/>
    <property type="match status" value="1"/>
</dbReference>
<dbReference type="Pfam" id="PF00032">
    <property type="entry name" value="Cytochrom_B_C"/>
    <property type="match status" value="1"/>
</dbReference>
<dbReference type="Pfam" id="PF00033">
    <property type="entry name" value="Cytochrome_B"/>
    <property type="match status" value="1"/>
</dbReference>
<dbReference type="PIRSF" id="PIRSF038885">
    <property type="entry name" value="COB"/>
    <property type="match status" value="1"/>
</dbReference>
<dbReference type="SUPFAM" id="SSF81648">
    <property type="entry name" value="a domain/subunit of cytochrome bc1 complex (Ubiquinol-cytochrome c reductase)"/>
    <property type="match status" value="1"/>
</dbReference>
<dbReference type="SUPFAM" id="SSF81342">
    <property type="entry name" value="Transmembrane di-heme cytochromes"/>
    <property type="match status" value="1"/>
</dbReference>
<dbReference type="PROSITE" id="PS51003">
    <property type="entry name" value="CYTB_CTER"/>
    <property type="match status" value="1"/>
</dbReference>
<dbReference type="PROSITE" id="PS51002">
    <property type="entry name" value="CYTB_NTER"/>
    <property type="match status" value="1"/>
</dbReference>
<sequence>MTNIRKSHPLTKIINNSFIDLPTPSNISAWWNFGSLLGICLILQILTGLFLAMHYTSDTTTAFSSVTHICRDVNYGWIIRYMHANGASMFFICLFLHVGRGLYYGSYMFPETWNIGIILLFTVMATAFMGYVLPWGQMSFWGATVITNLLSAIPYIGTNLVEWIWGGFSVDKATLTRFFAFHFILPFIISALAAVHLLFLHETGSNNPSGIPSNSDKIPFHPYYTIKDILGALLLTLTLMILVLFSPDLLGDPDNYTPANPLNTPPHIKPEWYFLFAYAILRSIPNKLGGVLALISSILILAIIPLLHTSKQRSMMFRPLSQCLFWLLVADLLTLTWIGGQPVEYPYIAIGQLASILYFTILLILMPMTSIIENNLLKW</sequence>
<protein>
    <recommendedName>
        <fullName>Cytochrome b</fullName>
    </recommendedName>
    <alternativeName>
        <fullName>Complex III subunit 3</fullName>
    </alternativeName>
    <alternativeName>
        <fullName>Complex III subunit III</fullName>
    </alternativeName>
    <alternativeName>
        <fullName>Cytochrome b-c1 complex subunit 3</fullName>
    </alternativeName>
    <alternativeName>
        <fullName>Ubiquinol-cytochrome-c reductase complex cytochrome b subunit</fullName>
    </alternativeName>
</protein>
<feature type="chain" id="PRO_0000060617" description="Cytochrome b">
    <location>
        <begin position="1"/>
        <end position="379"/>
    </location>
</feature>
<feature type="transmembrane region" description="Helical" evidence="2">
    <location>
        <begin position="33"/>
        <end position="53"/>
    </location>
</feature>
<feature type="transmembrane region" description="Helical" evidence="2">
    <location>
        <begin position="77"/>
        <end position="98"/>
    </location>
</feature>
<feature type="transmembrane region" description="Helical" evidence="2">
    <location>
        <begin position="113"/>
        <end position="133"/>
    </location>
</feature>
<feature type="transmembrane region" description="Helical" evidence="2">
    <location>
        <begin position="178"/>
        <end position="198"/>
    </location>
</feature>
<feature type="transmembrane region" description="Helical" evidence="2">
    <location>
        <begin position="226"/>
        <end position="246"/>
    </location>
</feature>
<feature type="transmembrane region" description="Helical" evidence="2">
    <location>
        <begin position="288"/>
        <end position="308"/>
    </location>
</feature>
<feature type="transmembrane region" description="Helical" evidence="2">
    <location>
        <begin position="320"/>
        <end position="340"/>
    </location>
</feature>
<feature type="transmembrane region" description="Helical" evidence="2">
    <location>
        <begin position="347"/>
        <end position="367"/>
    </location>
</feature>
<feature type="binding site" description="axial binding residue" evidence="2">
    <location>
        <position position="83"/>
    </location>
    <ligand>
        <name>heme b</name>
        <dbReference type="ChEBI" id="CHEBI:60344"/>
        <label>b562</label>
    </ligand>
    <ligandPart>
        <name>Fe</name>
        <dbReference type="ChEBI" id="CHEBI:18248"/>
    </ligandPart>
</feature>
<feature type="binding site" description="axial binding residue" evidence="2">
    <location>
        <position position="97"/>
    </location>
    <ligand>
        <name>heme b</name>
        <dbReference type="ChEBI" id="CHEBI:60344"/>
        <label>b566</label>
    </ligand>
    <ligandPart>
        <name>Fe</name>
        <dbReference type="ChEBI" id="CHEBI:18248"/>
    </ligandPart>
</feature>
<feature type="binding site" description="axial binding residue" evidence="2">
    <location>
        <position position="182"/>
    </location>
    <ligand>
        <name>heme b</name>
        <dbReference type="ChEBI" id="CHEBI:60344"/>
        <label>b562</label>
    </ligand>
    <ligandPart>
        <name>Fe</name>
        <dbReference type="ChEBI" id="CHEBI:18248"/>
    </ligandPart>
</feature>
<feature type="binding site" description="axial binding residue" evidence="2">
    <location>
        <position position="196"/>
    </location>
    <ligand>
        <name>heme b</name>
        <dbReference type="ChEBI" id="CHEBI:60344"/>
        <label>b566</label>
    </ligand>
    <ligandPart>
        <name>Fe</name>
        <dbReference type="ChEBI" id="CHEBI:18248"/>
    </ligandPart>
</feature>
<feature type="binding site" evidence="2">
    <location>
        <position position="201"/>
    </location>
    <ligand>
        <name>a ubiquinone</name>
        <dbReference type="ChEBI" id="CHEBI:16389"/>
    </ligand>
</feature>
<geneLocation type="mitochondrion"/>